<gene>
    <name type="primary">copA</name>
    <name type="ordered locus">NWMN_2457</name>
</gene>
<evidence type="ECO:0000250" key="1"/>
<evidence type="ECO:0000255" key="2"/>
<evidence type="ECO:0000255" key="3">
    <source>
        <dbReference type="PROSITE-ProRule" id="PRU00280"/>
    </source>
</evidence>
<evidence type="ECO:0000305" key="4"/>
<protein>
    <recommendedName>
        <fullName>Copper-exporting P-type ATPase</fullName>
        <ecNumber>7.2.2.8</ecNumber>
    </recommendedName>
    <alternativeName>
        <fullName>Copper-exporting P-type ATPase A</fullName>
    </alternativeName>
    <alternativeName>
        <fullName>Cu(+)-exporting ATPase</fullName>
    </alternativeName>
</protein>
<keyword id="KW-0067">ATP-binding</keyword>
<keyword id="KW-1003">Cell membrane</keyword>
<keyword id="KW-0186">Copper</keyword>
<keyword id="KW-0187">Copper transport</keyword>
<keyword id="KW-0406">Ion transport</keyword>
<keyword id="KW-0460">Magnesium</keyword>
<keyword id="KW-0472">Membrane</keyword>
<keyword id="KW-0479">Metal-binding</keyword>
<keyword id="KW-0547">Nucleotide-binding</keyword>
<keyword id="KW-0597">Phosphoprotein</keyword>
<keyword id="KW-0677">Repeat</keyword>
<keyword id="KW-1278">Translocase</keyword>
<keyword id="KW-0812">Transmembrane</keyword>
<keyword id="KW-1133">Transmembrane helix</keyword>
<keyword id="KW-0813">Transport</keyword>
<comment type="function">
    <text evidence="1">Involved in copper export.</text>
</comment>
<comment type="catalytic activity">
    <reaction>
        <text>Cu(+)(in) + ATP + H2O = Cu(+)(out) + ADP + phosphate + H(+)</text>
        <dbReference type="Rhea" id="RHEA:25792"/>
        <dbReference type="ChEBI" id="CHEBI:15377"/>
        <dbReference type="ChEBI" id="CHEBI:15378"/>
        <dbReference type="ChEBI" id="CHEBI:30616"/>
        <dbReference type="ChEBI" id="CHEBI:43474"/>
        <dbReference type="ChEBI" id="CHEBI:49552"/>
        <dbReference type="ChEBI" id="CHEBI:456216"/>
        <dbReference type="EC" id="7.2.2.8"/>
    </reaction>
</comment>
<comment type="subcellular location">
    <subcellularLocation>
        <location evidence="1">Cell membrane</location>
        <topology evidence="1">Multi-pass membrane protein</topology>
    </subcellularLocation>
</comment>
<comment type="similarity">
    <text evidence="4">Belongs to the cation transport ATPase (P-type) (TC 3.A.3) family. Type IB subfamily.</text>
</comment>
<sequence>MANTKKTTLDITGMTCAACSNRIEKKLNKLDDVNAQVNLTTEKATVEYNPDQHDVQEFINTIQHLGYGVAVETVELDITGMTCAACSSRIEKVLNKMDGVQNATVNLTTEQAKVDYYPEETDADKLVTRIQKLGYDASIKDNNKDQTSRKAEALQHKLIKLIISAVLSLPLLMLMFVHLFNMHIPALFTNPWFQFILATPVQFIIGWQFYVGAYKNLRNGGANMDVLVAVGTSAAYFYSIYEMVRWLNGSTTQPHLYFETSAVLITLILFGKYLEARAKSQTTNALGELLSLQAKEARILKDGNEVMIPLNEVHVGDTLIVKPGEKIPVDGKIIKGMTAIDESMLTGESIPVEKNVDDTVIGSTMNKNGTITMTATKVGGDTALANIIKVVEEAQSSKAPIQRLADIISGYFVPIVVGIALLTFIVWITLVTPGTFEPALVASISVLVIACPCALGLATPTSIMVGTGRAAENGILFKGGEFVERTHQIDTIVLDKTGTITNGRPVVTDYHGDNQTLQLLATAEKDSEHPLAEAIVNYAKEKQLILTETTTFKAVPGHGIEATIDHHHILVGNRKLMADNDISLPKHISDDLTHYERDGKTAMLIAVNYSLTGIIAVADTVKDHAKDAIKQLHDMGIEVAMLTGDNKNTAQAIAKQVGIDTVIADILPEEKAAQIAKLQQQGKKVAMVGDGVNDAPALVKADIGIAIGTGTEVAIEAADITILGGDLMLIPKAIYASKATIRNIRQNLFWAFGYNIAGIPIAALGLLAPWVAGAAMALSSVSVVTNALRLKKMRLEPRRKDA</sequence>
<accession>A6QK47</accession>
<reference key="1">
    <citation type="journal article" date="2008" name="J. Bacteriol.">
        <title>Genome sequence of Staphylococcus aureus strain Newman and comparative analysis of staphylococcal genomes: polymorphism and evolution of two major pathogenicity islands.</title>
        <authorList>
            <person name="Baba T."/>
            <person name="Bae T."/>
            <person name="Schneewind O."/>
            <person name="Takeuchi F."/>
            <person name="Hiramatsu K."/>
        </authorList>
    </citation>
    <scope>NUCLEOTIDE SEQUENCE [LARGE SCALE GENOMIC DNA]</scope>
    <source>
        <strain>Newman</strain>
    </source>
</reference>
<proteinExistence type="inferred from homology"/>
<dbReference type="EC" id="7.2.2.8"/>
<dbReference type="EMBL" id="AP009351">
    <property type="protein sequence ID" value="BAF68729.1"/>
    <property type="molecule type" value="Genomic_DNA"/>
</dbReference>
<dbReference type="RefSeq" id="WP_000024127.1">
    <property type="nucleotide sequence ID" value="NZ_JBBIAE010000012.1"/>
</dbReference>
<dbReference type="SMR" id="A6QK47"/>
<dbReference type="KEGG" id="sae:NWMN_2457"/>
<dbReference type="HOGENOM" id="CLU_001771_0_3_9"/>
<dbReference type="Proteomes" id="UP000006386">
    <property type="component" value="Chromosome"/>
</dbReference>
<dbReference type="GO" id="GO:0005886">
    <property type="term" value="C:plasma membrane"/>
    <property type="evidence" value="ECO:0007669"/>
    <property type="project" value="UniProtKB-SubCell"/>
</dbReference>
<dbReference type="GO" id="GO:0005524">
    <property type="term" value="F:ATP binding"/>
    <property type="evidence" value="ECO:0007669"/>
    <property type="project" value="UniProtKB-KW"/>
</dbReference>
<dbReference type="GO" id="GO:0016887">
    <property type="term" value="F:ATP hydrolysis activity"/>
    <property type="evidence" value="ECO:0007669"/>
    <property type="project" value="InterPro"/>
</dbReference>
<dbReference type="GO" id="GO:0005507">
    <property type="term" value="F:copper ion binding"/>
    <property type="evidence" value="ECO:0007669"/>
    <property type="project" value="InterPro"/>
</dbReference>
<dbReference type="GO" id="GO:0043682">
    <property type="term" value="F:P-type divalent copper transporter activity"/>
    <property type="evidence" value="ECO:0007669"/>
    <property type="project" value="TreeGrafter"/>
</dbReference>
<dbReference type="GO" id="GO:0140581">
    <property type="term" value="F:P-type monovalent copper transporter activity"/>
    <property type="evidence" value="ECO:0007669"/>
    <property type="project" value="UniProtKB-EC"/>
</dbReference>
<dbReference type="GO" id="GO:0055070">
    <property type="term" value="P:copper ion homeostasis"/>
    <property type="evidence" value="ECO:0007669"/>
    <property type="project" value="TreeGrafter"/>
</dbReference>
<dbReference type="CDD" id="cd00371">
    <property type="entry name" value="HMA"/>
    <property type="match status" value="2"/>
</dbReference>
<dbReference type="CDD" id="cd02094">
    <property type="entry name" value="P-type_ATPase_Cu-like"/>
    <property type="match status" value="1"/>
</dbReference>
<dbReference type="FunFam" id="3.40.1110.10:FF:000038">
    <property type="entry name" value="Copper-exporting P-type ATPase"/>
    <property type="match status" value="1"/>
</dbReference>
<dbReference type="FunFam" id="3.40.1110.10:FF:000049">
    <property type="entry name" value="Copper-exporting P-type ATPase"/>
    <property type="match status" value="1"/>
</dbReference>
<dbReference type="FunFam" id="2.70.150.10:FF:000020">
    <property type="entry name" value="Copper-exporting P-type ATPase A"/>
    <property type="match status" value="1"/>
</dbReference>
<dbReference type="FunFam" id="3.30.70.100:FF:000005">
    <property type="entry name" value="Copper-exporting P-type ATPase A"/>
    <property type="match status" value="2"/>
</dbReference>
<dbReference type="FunFam" id="3.40.50.1000:FF:000144">
    <property type="entry name" value="copper-transporting ATPase 1 isoform X2"/>
    <property type="match status" value="1"/>
</dbReference>
<dbReference type="Gene3D" id="3.30.70.100">
    <property type="match status" value="2"/>
</dbReference>
<dbReference type="Gene3D" id="3.40.1110.10">
    <property type="entry name" value="Calcium-transporting ATPase, cytoplasmic domain N"/>
    <property type="match status" value="2"/>
</dbReference>
<dbReference type="Gene3D" id="2.70.150.10">
    <property type="entry name" value="Calcium-transporting ATPase, cytoplasmic transduction domain A"/>
    <property type="match status" value="1"/>
</dbReference>
<dbReference type="Gene3D" id="3.40.50.1000">
    <property type="entry name" value="HAD superfamily/HAD-like"/>
    <property type="match status" value="1"/>
</dbReference>
<dbReference type="InterPro" id="IPR023299">
    <property type="entry name" value="ATPase_P-typ_cyto_dom_N"/>
</dbReference>
<dbReference type="InterPro" id="IPR018303">
    <property type="entry name" value="ATPase_P-typ_P_site"/>
</dbReference>
<dbReference type="InterPro" id="IPR023298">
    <property type="entry name" value="ATPase_P-typ_TM_dom_sf"/>
</dbReference>
<dbReference type="InterPro" id="IPR008250">
    <property type="entry name" value="ATPase_P-typ_transduc_dom_A_sf"/>
</dbReference>
<dbReference type="InterPro" id="IPR036412">
    <property type="entry name" value="HAD-like_sf"/>
</dbReference>
<dbReference type="InterPro" id="IPR023214">
    <property type="entry name" value="HAD_sf"/>
</dbReference>
<dbReference type="InterPro" id="IPR017969">
    <property type="entry name" value="Heavy-metal-associated_CS"/>
</dbReference>
<dbReference type="InterPro" id="IPR006122">
    <property type="entry name" value="HMA_Cu_ion-bd"/>
</dbReference>
<dbReference type="InterPro" id="IPR006121">
    <property type="entry name" value="HMA_dom"/>
</dbReference>
<dbReference type="InterPro" id="IPR036163">
    <property type="entry name" value="HMA_dom_sf"/>
</dbReference>
<dbReference type="InterPro" id="IPR027256">
    <property type="entry name" value="P-typ_ATPase_IB"/>
</dbReference>
<dbReference type="InterPro" id="IPR001757">
    <property type="entry name" value="P_typ_ATPase"/>
</dbReference>
<dbReference type="InterPro" id="IPR044492">
    <property type="entry name" value="P_typ_ATPase_HD_dom"/>
</dbReference>
<dbReference type="NCBIfam" id="TIGR01511">
    <property type="entry name" value="ATPase-IB1_Cu"/>
    <property type="match status" value="1"/>
</dbReference>
<dbReference type="NCBIfam" id="TIGR01525">
    <property type="entry name" value="ATPase-IB_hvy"/>
    <property type="match status" value="1"/>
</dbReference>
<dbReference type="NCBIfam" id="TIGR01494">
    <property type="entry name" value="ATPase_P-type"/>
    <property type="match status" value="1"/>
</dbReference>
<dbReference type="NCBIfam" id="TIGR00003">
    <property type="entry name" value="copper ion binding protein"/>
    <property type="match status" value="2"/>
</dbReference>
<dbReference type="PANTHER" id="PTHR43520">
    <property type="entry name" value="ATP7, ISOFORM B"/>
    <property type="match status" value="1"/>
</dbReference>
<dbReference type="PANTHER" id="PTHR43520:SF8">
    <property type="entry name" value="P-TYPE CU(+) TRANSPORTER"/>
    <property type="match status" value="1"/>
</dbReference>
<dbReference type="Pfam" id="PF00122">
    <property type="entry name" value="E1-E2_ATPase"/>
    <property type="match status" value="1"/>
</dbReference>
<dbReference type="Pfam" id="PF00403">
    <property type="entry name" value="HMA"/>
    <property type="match status" value="2"/>
</dbReference>
<dbReference type="Pfam" id="PF00702">
    <property type="entry name" value="Hydrolase"/>
    <property type="match status" value="1"/>
</dbReference>
<dbReference type="PRINTS" id="PR00119">
    <property type="entry name" value="CATATPASE"/>
</dbReference>
<dbReference type="PRINTS" id="PR00943">
    <property type="entry name" value="CUATPASE"/>
</dbReference>
<dbReference type="SFLD" id="SFLDS00003">
    <property type="entry name" value="Haloacid_Dehalogenase"/>
    <property type="match status" value="1"/>
</dbReference>
<dbReference type="SFLD" id="SFLDF00027">
    <property type="entry name" value="p-type_atpase"/>
    <property type="match status" value="1"/>
</dbReference>
<dbReference type="SUPFAM" id="SSF81653">
    <property type="entry name" value="Calcium ATPase, transduction domain A"/>
    <property type="match status" value="1"/>
</dbReference>
<dbReference type="SUPFAM" id="SSF81665">
    <property type="entry name" value="Calcium ATPase, transmembrane domain M"/>
    <property type="match status" value="1"/>
</dbReference>
<dbReference type="SUPFAM" id="SSF56784">
    <property type="entry name" value="HAD-like"/>
    <property type="match status" value="1"/>
</dbReference>
<dbReference type="SUPFAM" id="SSF55008">
    <property type="entry name" value="HMA, heavy metal-associated domain"/>
    <property type="match status" value="2"/>
</dbReference>
<dbReference type="PROSITE" id="PS00154">
    <property type="entry name" value="ATPASE_E1_E2"/>
    <property type="match status" value="1"/>
</dbReference>
<dbReference type="PROSITE" id="PS01047">
    <property type="entry name" value="HMA_1"/>
    <property type="match status" value="2"/>
</dbReference>
<dbReference type="PROSITE" id="PS50846">
    <property type="entry name" value="HMA_2"/>
    <property type="match status" value="2"/>
</dbReference>
<organism>
    <name type="scientific">Staphylococcus aureus (strain Newman)</name>
    <dbReference type="NCBI Taxonomy" id="426430"/>
    <lineage>
        <taxon>Bacteria</taxon>
        <taxon>Bacillati</taxon>
        <taxon>Bacillota</taxon>
        <taxon>Bacilli</taxon>
        <taxon>Bacillales</taxon>
        <taxon>Staphylococcaceae</taxon>
        <taxon>Staphylococcus</taxon>
    </lineage>
</organism>
<name>COPA_STAAE</name>
<feature type="chain" id="PRO_0000350594" description="Copper-exporting P-type ATPase">
    <location>
        <begin position="1"/>
        <end position="802"/>
    </location>
</feature>
<feature type="transmembrane region" description="Helical" evidence="2">
    <location>
        <begin position="161"/>
        <end position="181"/>
    </location>
</feature>
<feature type="transmembrane region" description="Helical" evidence="2">
    <location>
        <begin position="192"/>
        <end position="212"/>
    </location>
</feature>
<feature type="transmembrane region" description="Helical" evidence="2">
    <location>
        <begin position="224"/>
        <end position="244"/>
    </location>
</feature>
<feature type="transmembrane region" description="Helical" evidence="2">
    <location>
        <begin position="256"/>
        <end position="276"/>
    </location>
</feature>
<feature type="transmembrane region" description="Helical" evidence="2">
    <location>
        <begin position="411"/>
        <end position="431"/>
    </location>
</feature>
<feature type="transmembrane region" description="Helical" evidence="2">
    <location>
        <begin position="438"/>
        <end position="458"/>
    </location>
</feature>
<feature type="transmembrane region" description="Helical" evidence="2">
    <location>
        <begin position="748"/>
        <end position="767"/>
    </location>
</feature>
<feature type="transmembrane region" description="Helical" evidence="2">
    <location>
        <begin position="771"/>
        <end position="790"/>
    </location>
</feature>
<feature type="domain" description="HMA 1" evidence="3">
    <location>
        <begin position="5"/>
        <end position="70"/>
    </location>
</feature>
<feature type="domain" description="HMA 2" evidence="3">
    <location>
        <begin position="72"/>
        <end position="138"/>
    </location>
</feature>
<feature type="active site" description="4-aspartylphosphate intermediate" evidence="1">
    <location>
        <position position="495"/>
    </location>
</feature>
<feature type="binding site" evidence="3">
    <location>
        <position position="16"/>
    </location>
    <ligand>
        <name>Cu(+)</name>
        <dbReference type="ChEBI" id="CHEBI:49552"/>
        <label>1</label>
    </ligand>
</feature>
<feature type="binding site" evidence="3">
    <location>
        <position position="19"/>
    </location>
    <ligand>
        <name>Cu(+)</name>
        <dbReference type="ChEBI" id="CHEBI:49552"/>
        <label>1</label>
    </ligand>
</feature>
<feature type="binding site" evidence="3">
    <location>
        <position position="83"/>
    </location>
    <ligand>
        <name>Cu(+)</name>
        <dbReference type="ChEBI" id="CHEBI:49552"/>
        <label>2</label>
    </ligand>
</feature>
<feature type="binding site" evidence="3">
    <location>
        <position position="86"/>
    </location>
    <ligand>
        <name>Cu(+)</name>
        <dbReference type="ChEBI" id="CHEBI:49552"/>
        <label>2</label>
    </ligand>
</feature>
<feature type="binding site">
    <location>
        <position position="690"/>
    </location>
    <ligand>
        <name>Mg(2+)</name>
        <dbReference type="ChEBI" id="CHEBI:18420"/>
    </ligand>
</feature>
<feature type="binding site">
    <location>
        <position position="694"/>
    </location>
    <ligand>
        <name>Mg(2+)</name>
        <dbReference type="ChEBI" id="CHEBI:18420"/>
    </ligand>
</feature>